<comment type="function">
    <text evidence="1">Involved in pre-mRNA splicing and cell cycle control.</text>
</comment>
<comment type="subunit">
    <text evidence="1">Associated with the spliceosome.</text>
</comment>
<comment type="subcellular location">
    <subcellularLocation>
        <location evidence="1">Nucleus</location>
    </subcellularLocation>
</comment>
<comment type="similarity">
    <text evidence="2">Belongs to the RSE1 family.</text>
</comment>
<comment type="sequence caution" evidence="2">
    <conflict type="erroneous gene model prediction">
        <sequence resource="EMBL-CDS" id="EAL23311"/>
    </conflict>
</comment>
<sequence>MHLLNLTLSSPTNVSTAVVGSFSGSKSQEILCVRGGTKLEIFKLNATTGQLDTIVSTEAFGTIRNIAGFRLAGMTKDYILATSDSGRLSILEFVISPTPHFESLYQEVFGKSGSRRIVPGQFLAVDPKGRSCLVGSLEKTKLVYVLNRNTEGKLYPSSPLEAHKNHTLVTHIVGVDQGYDNPLYAALETDYSESDQDSTGEAYENTQKHLTFYELDLGLNHVVRKWSEPTDRRANLLVQVPGGQNANSDRFEGPSGVLVCTEDHIIWKHMDVEAHRIPIPRRRNPLVQRGDKSRGLIIVSAVMHKIKGAFFFLLQSEDGDLYKVWIEHNGEDVVALKIKYFDTVPVANSLCILKRGYIYVASEFSDQNLYQFQSLAEDDGEQEWSSTDYPENGNIDGPLPFAFFDPQPLRNLLLVDTVPSLDPITDAHVVNLLGASSDTPQIYAACGRGARSTFRTLKHGLDVAEMVSSPLPGVPTNVWTLKLTEDDEYDSYIVLSFPNGTLVLSIGETIEEVNDTGFLSSGPTLAVQQLGNAGLLQVHPYGLRHIRAADRVDEWPAPPGQTIVAATTNRRQVVIALSTAELVYFELDPEGSLSEYQEKKALPGNATCVTIAEVPEGRRRTSFLAVGCDNQTVSIISLEPDSTLDTLSLQALTAPPTSICLAEIFDTSIDKNRATMFLNIGLMNGVLLRTVVDPVDGSLSDTRLRFLGAKPPKLVRANVQGQPSVMAFSSRTWLLYTYQDMLQTQPLIYDTLEYAWSLSAAMCPDGLIGISGNTLRIFNIPKLGEKLKQDSTALTYTPRKFISHPFNSVFYMIEADHRTYSKSAIERIVKQKESEGRRVDTLLLDLPANEFGRPRAPAGHWASCVRVLDPLANETIMTLDLDEDEAAFSIAIAYFERGGGEPFLVVGTGVKTTLQPKGCKEGYLRVYAIKEQGRILEFLHKTKTDDIPLCLAGFQGFLLAGIGKSLRLYEMGKKALLRKCENNGFPTAVVTINVQGARIIVGDMQESTFYCVYRSIPTRQLLIFADDSQPRWITCVTSVDYETVACGDKFGNIFINRLDPSISEKVDDDPTGATILHEKSFLMGAAHKTEMIGHYNIGSVVTSITKIPLVAGGRDVLVYTTISGAVGALVPFVSSDDIEFMSTLEMHMRTQDISLVGRDHIAYRGYYVPIKGVVDGDLCESFSLLPYPKQQAIALDLDRSVGDVLKKLEQMRTSSAF</sequence>
<organism>
    <name type="scientific">Cryptococcus neoformans var. neoformans serotype D (strain B-3501A)</name>
    <name type="common">Filobasidiella neoformans</name>
    <dbReference type="NCBI Taxonomy" id="283643"/>
    <lineage>
        <taxon>Eukaryota</taxon>
        <taxon>Fungi</taxon>
        <taxon>Dikarya</taxon>
        <taxon>Basidiomycota</taxon>
        <taxon>Agaricomycotina</taxon>
        <taxon>Tremellomycetes</taxon>
        <taxon>Tremellales</taxon>
        <taxon>Cryptococcaceae</taxon>
        <taxon>Cryptococcus</taxon>
        <taxon>Cryptococcus neoformans species complex</taxon>
    </lineage>
</organism>
<name>RSE1_CRYNB</name>
<accession>P0CR23</accession>
<accession>Q55ZR3</accession>
<accession>Q5KP25</accession>
<keyword id="KW-0507">mRNA processing</keyword>
<keyword id="KW-0508">mRNA splicing</keyword>
<keyword id="KW-0539">Nucleus</keyword>
<keyword id="KW-0747">Spliceosome</keyword>
<protein>
    <recommendedName>
        <fullName>Pre-mRNA-splicing factor RSE1</fullName>
    </recommendedName>
</protein>
<reference key="1">
    <citation type="journal article" date="2005" name="Science">
        <title>The genome of the basidiomycetous yeast and human pathogen Cryptococcus neoformans.</title>
        <authorList>
            <person name="Loftus B.J."/>
            <person name="Fung E."/>
            <person name="Roncaglia P."/>
            <person name="Rowley D."/>
            <person name="Amedeo P."/>
            <person name="Bruno D."/>
            <person name="Vamathevan J."/>
            <person name="Miranda M."/>
            <person name="Anderson I.J."/>
            <person name="Fraser J.A."/>
            <person name="Allen J.E."/>
            <person name="Bosdet I.E."/>
            <person name="Brent M.R."/>
            <person name="Chiu R."/>
            <person name="Doering T.L."/>
            <person name="Donlin M.J."/>
            <person name="D'Souza C.A."/>
            <person name="Fox D.S."/>
            <person name="Grinberg V."/>
            <person name="Fu J."/>
            <person name="Fukushima M."/>
            <person name="Haas B.J."/>
            <person name="Huang J.C."/>
            <person name="Janbon G."/>
            <person name="Jones S.J.M."/>
            <person name="Koo H.L."/>
            <person name="Krzywinski M.I."/>
            <person name="Kwon-Chung K.J."/>
            <person name="Lengeler K.B."/>
            <person name="Maiti R."/>
            <person name="Marra M.A."/>
            <person name="Marra R.E."/>
            <person name="Mathewson C.A."/>
            <person name="Mitchell T.G."/>
            <person name="Pertea M."/>
            <person name="Riggs F.R."/>
            <person name="Salzberg S.L."/>
            <person name="Schein J.E."/>
            <person name="Shvartsbeyn A."/>
            <person name="Shin H."/>
            <person name="Shumway M."/>
            <person name="Specht C.A."/>
            <person name="Suh B.B."/>
            <person name="Tenney A."/>
            <person name="Utterback T.R."/>
            <person name="Wickes B.L."/>
            <person name="Wortman J.R."/>
            <person name="Wye N.H."/>
            <person name="Kronstad J.W."/>
            <person name="Lodge J.K."/>
            <person name="Heitman J."/>
            <person name="Davis R.W."/>
            <person name="Fraser C.M."/>
            <person name="Hyman R.W."/>
        </authorList>
    </citation>
    <scope>NUCLEOTIDE SEQUENCE [LARGE SCALE GENOMIC DNA]</scope>
    <source>
        <strain>B-3501A</strain>
    </source>
</reference>
<proteinExistence type="inferred from homology"/>
<evidence type="ECO:0000250" key="1"/>
<evidence type="ECO:0000305" key="2"/>
<feature type="chain" id="PRO_0000410273" description="Pre-mRNA-splicing factor RSE1">
    <location>
        <begin position="1"/>
        <end position="1217"/>
    </location>
</feature>
<dbReference type="EMBL" id="AAEY01000002">
    <property type="protein sequence ID" value="EAL23311.1"/>
    <property type="status" value="ALT_SEQ"/>
    <property type="molecule type" value="Genomic_DNA"/>
</dbReference>
<dbReference type="RefSeq" id="XP_777958.1">
    <property type="nucleotide sequence ID" value="XM_772865.1"/>
</dbReference>
<dbReference type="SMR" id="P0CR23"/>
<dbReference type="EnsemblFungi" id="AAW40985">
    <property type="protein sequence ID" value="AAW40985"/>
    <property type="gene ID" value="CNA04430"/>
</dbReference>
<dbReference type="GeneID" id="4933686"/>
<dbReference type="KEGG" id="cnb:CNBA4270"/>
<dbReference type="HOGENOM" id="CLU_003246_0_0_1"/>
<dbReference type="OrthoDB" id="831at5206"/>
<dbReference type="GO" id="GO:0005681">
    <property type="term" value="C:spliceosomal complex"/>
    <property type="evidence" value="ECO:0007669"/>
    <property type="project" value="UniProtKB-KW"/>
</dbReference>
<dbReference type="GO" id="GO:0003676">
    <property type="term" value="F:nucleic acid binding"/>
    <property type="evidence" value="ECO:0007669"/>
    <property type="project" value="InterPro"/>
</dbReference>
<dbReference type="GO" id="GO:0006397">
    <property type="term" value="P:mRNA processing"/>
    <property type="evidence" value="ECO:0007669"/>
    <property type="project" value="UniProtKB-KW"/>
</dbReference>
<dbReference type="GO" id="GO:0008380">
    <property type="term" value="P:RNA splicing"/>
    <property type="evidence" value="ECO:0007669"/>
    <property type="project" value="UniProtKB-KW"/>
</dbReference>
<dbReference type="FunFam" id="2.130.10.10:FF:001143">
    <property type="entry name" value="Pre-mRNA-splicing factor rse-1, putative"/>
    <property type="match status" value="1"/>
</dbReference>
<dbReference type="FunFam" id="2.130.10.10:FF:000628">
    <property type="entry name" value="Pre-mRNA-splicing factor RSE1"/>
    <property type="match status" value="1"/>
</dbReference>
<dbReference type="FunFam" id="2.130.10.10:FF:000068">
    <property type="entry name" value="Pre-mRNA-splicing factor rse1, variant"/>
    <property type="match status" value="1"/>
</dbReference>
<dbReference type="Gene3D" id="2.130.10.10">
    <property type="entry name" value="YVTN repeat-like/Quinoprotein amine dehydrogenase"/>
    <property type="match status" value="3"/>
</dbReference>
<dbReference type="InterPro" id="IPR018846">
    <property type="entry name" value="Beta-prop_RSE1/DDB1/CPSF1_1st"/>
</dbReference>
<dbReference type="InterPro" id="IPR004871">
    <property type="entry name" value="Cleavage/polyA-sp_fac_asu_C"/>
</dbReference>
<dbReference type="InterPro" id="IPR050358">
    <property type="entry name" value="RSE1/DDB1/CFT1/CPSF1"/>
</dbReference>
<dbReference type="InterPro" id="IPR015943">
    <property type="entry name" value="WD40/YVTN_repeat-like_dom_sf"/>
</dbReference>
<dbReference type="InterPro" id="IPR036322">
    <property type="entry name" value="WD40_repeat_dom_sf"/>
</dbReference>
<dbReference type="PANTHER" id="PTHR10644">
    <property type="entry name" value="DNA REPAIR/RNA PROCESSING CPSF FAMILY"/>
    <property type="match status" value="1"/>
</dbReference>
<dbReference type="Pfam" id="PF10433">
    <property type="entry name" value="Beta-prop_RSE1_1st"/>
    <property type="match status" value="1"/>
</dbReference>
<dbReference type="Pfam" id="PF23726">
    <property type="entry name" value="Beta-prop_RSE1_2nd"/>
    <property type="match status" value="1"/>
</dbReference>
<dbReference type="Pfam" id="PF03178">
    <property type="entry name" value="CPSF_A"/>
    <property type="match status" value="1"/>
</dbReference>
<dbReference type="SUPFAM" id="SSF50978">
    <property type="entry name" value="WD40 repeat-like"/>
    <property type="match status" value="1"/>
</dbReference>
<gene>
    <name type="primary">RSE1</name>
    <name type="ordered locus">CNBA4270</name>
</gene>